<sequence length="726" mass="80337">MLTTFLNSLMMAMTMVTMTAPAQPQMTTVATAIDSNPNKASKDASDPRAYLNEIDGDKAMTWVEAHNLSTVDKLSKDPRYSEYQADALTILQATDRIASPSFARDGMIDNFWQDGTHVQGLWRRTTWESYRSGNPQWRTILDVDALSKAEGKTWVFEGGDCLPPTSNLCLIRLSDGGKDADVVREFDIAKGEFVKEGFVLPEGKQSVTWVDENTIYVTREWTPGEVTSSGYAYVTKVVKRGQSLDQAVEIFRGQKKDVSAERGVLRDIDGKYVMDTSYRGLDFFNTELAFYPNGHPDTRKVVLPLPTTAVFSGYYKGQAIYWLKSDWTSAKGTVFHNGAIIAFDLKAALADPARVEPLVLFMPNEHQSVAGTTQTKNRLVLSILSNVTSEVRSFDFGKGGWSSFKLALPENSTLSLTSSDDESDQLFVFSEGFLEPSTLFCADAATGQVEKITSTPARFDAGGLQAQQFWATSKDGTKVPYFLVARKDVKLDGTNPTILYAYGGFQIPMQPSYSAVLGKLWLEKGGAYALANIRGGGEFGPKWHDAGLKTNRQRVYDDFQAVAQDLIAKKVTSTPHLGIMGGSNGGLLMGVQMIQRPDLWNAVVIQVPLLDMVNFTRMSAGASWQAEYGSPDDPVEGAFLRSISPYHNVKAGVAYPEPFFETSTKDDRVGPVHARKMAALFEDMGLPFYYYENIEGGHAAAANLQEHARRYALEYIYMFQKLMDNK</sequence>
<dbReference type="EC" id="3.4.21.-"/>
<dbReference type="EMBL" id="U00090">
    <property type="protein sequence ID" value="AAB91781.1"/>
    <property type="molecule type" value="Genomic_DNA"/>
</dbReference>
<dbReference type="RefSeq" id="NP_443984.1">
    <property type="nucleotide sequence ID" value="NC_000914.2"/>
</dbReference>
<dbReference type="RefSeq" id="WP_010875266.1">
    <property type="nucleotide sequence ID" value="NC_000914.2"/>
</dbReference>
<dbReference type="SMR" id="P55577"/>
<dbReference type="ESTHER" id="rhisn-y4na">
    <property type="family name" value="S9N_PPCE_Peptidase_S9"/>
</dbReference>
<dbReference type="KEGG" id="rhi:NGR_a02410"/>
<dbReference type="PATRIC" id="fig|394.7.peg.251"/>
<dbReference type="eggNOG" id="COG1505">
    <property type="taxonomic scope" value="Bacteria"/>
</dbReference>
<dbReference type="HOGENOM" id="CLU_011290_4_0_5"/>
<dbReference type="OrthoDB" id="9801421at2"/>
<dbReference type="Proteomes" id="UP000001054">
    <property type="component" value="Plasmid pNGR234a"/>
</dbReference>
<dbReference type="GO" id="GO:0005829">
    <property type="term" value="C:cytosol"/>
    <property type="evidence" value="ECO:0007669"/>
    <property type="project" value="TreeGrafter"/>
</dbReference>
<dbReference type="GO" id="GO:0070012">
    <property type="term" value="F:oligopeptidase activity"/>
    <property type="evidence" value="ECO:0007669"/>
    <property type="project" value="TreeGrafter"/>
</dbReference>
<dbReference type="GO" id="GO:0004252">
    <property type="term" value="F:serine-type endopeptidase activity"/>
    <property type="evidence" value="ECO:0007669"/>
    <property type="project" value="InterPro"/>
</dbReference>
<dbReference type="GO" id="GO:0006508">
    <property type="term" value="P:proteolysis"/>
    <property type="evidence" value="ECO:0007669"/>
    <property type="project" value="UniProtKB-KW"/>
</dbReference>
<dbReference type="Gene3D" id="3.40.50.1820">
    <property type="entry name" value="alpha/beta hydrolase"/>
    <property type="match status" value="1"/>
</dbReference>
<dbReference type="Gene3D" id="2.130.10.120">
    <property type="entry name" value="Prolyl oligopeptidase, N-terminal domain"/>
    <property type="match status" value="1"/>
</dbReference>
<dbReference type="InterPro" id="IPR029058">
    <property type="entry name" value="AB_hydrolase_fold"/>
</dbReference>
<dbReference type="InterPro" id="IPR023302">
    <property type="entry name" value="Pept_S9A_N"/>
</dbReference>
<dbReference type="InterPro" id="IPR001375">
    <property type="entry name" value="Peptidase_S9_cat"/>
</dbReference>
<dbReference type="InterPro" id="IPR002470">
    <property type="entry name" value="Peptidase_S9A"/>
</dbReference>
<dbReference type="InterPro" id="IPR051167">
    <property type="entry name" value="Prolyl_oligopep/macrocyclase"/>
</dbReference>
<dbReference type="PANTHER" id="PTHR42881">
    <property type="entry name" value="PROLYL ENDOPEPTIDASE"/>
    <property type="match status" value="1"/>
</dbReference>
<dbReference type="PANTHER" id="PTHR42881:SF13">
    <property type="entry name" value="PROLYL ENDOPEPTIDASE"/>
    <property type="match status" value="1"/>
</dbReference>
<dbReference type="Pfam" id="PF00326">
    <property type="entry name" value="Peptidase_S9"/>
    <property type="match status" value="1"/>
</dbReference>
<dbReference type="Pfam" id="PF02897">
    <property type="entry name" value="Peptidase_S9_N"/>
    <property type="match status" value="1"/>
</dbReference>
<dbReference type="PRINTS" id="PR00862">
    <property type="entry name" value="PROLIGOPTASE"/>
</dbReference>
<dbReference type="SUPFAM" id="SSF53474">
    <property type="entry name" value="alpha/beta-Hydrolases"/>
    <property type="match status" value="1"/>
</dbReference>
<dbReference type="SUPFAM" id="SSF50993">
    <property type="entry name" value="Peptidase/esterase 'gauge' domain"/>
    <property type="match status" value="1"/>
</dbReference>
<name>Y4NA_SINFN</name>
<protein>
    <recommendedName>
        <fullName>Uncharacterized peptidase y4nA</fullName>
        <ecNumber>3.4.21.-</ecNumber>
    </recommendedName>
</protein>
<gene>
    <name type="ordered locus">NGR_a02410</name>
    <name type="ORF">y4nA</name>
</gene>
<evidence type="ECO:0000250" key="1"/>
<evidence type="ECO:0000305" key="2"/>
<feature type="chain" id="PRO_0000122427" description="Uncharacterized peptidase y4nA">
    <location>
        <begin position="1"/>
        <end position="726"/>
    </location>
</feature>
<feature type="active site" description="Charge relay system" evidence="1">
    <location>
        <position position="583"/>
    </location>
</feature>
<feature type="active site" description="Charge relay system" evidence="1">
    <location>
        <position position="698"/>
    </location>
</feature>
<proteinExistence type="inferred from homology"/>
<accession>P55577</accession>
<keyword id="KW-0378">Hydrolase</keyword>
<keyword id="KW-0614">Plasmid</keyword>
<keyword id="KW-0645">Protease</keyword>
<keyword id="KW-1185">Reference proteome</keyword>
<keyword id="KW-0720">Serine protease</keyword>
<comment type="similarity">
    <text evidence="2">Belongs to the peptidase S9B family.</text>
</comment>
<organism>
    <name type="scientific">Sinorhizobium fredii (strain NBRC 101917 / NGR234)</name>
    <dbReference type="NCBI Taxonomy" id="394"/>
    <lineage>
        <taxon>Bacteria</taxon>
        <taxon>Pseudomonadati</taxon>
        <taxon>Pseudomonadota</taxon>
        <taxon>Alphaproteobacteria</taxon>
        <taxon>Hyphomicrobiales</taxon>
        <taxon>Rhizobiaceae</taxon>
        <taxon>Sinorhizobium/Ensifer group</taxon>
        <taxon>Sinorhizobium</taxon>
    </lineage>
</organism>
<geneLocation type="plasmid">
    <name>sym pNGR234a</name>
</geneLocation>
<reference key="1">
    <citation type="journal article" date="1997" name="Nature">
        <title>Molecular basis of symbiosis between Rhizobium and legumes.</title>
        <authorList>
            <person name="Freiberg C.A."/>
            <person name="Fellay R."/>
            <person name="Bairoch A."/>
            <person name="Broughton W.J."/>
            <person name="Rosenthal A."/>
            <person name="Perret X."/>
        </authorList>
    </citation>
    <scope>NUCLEOTIDE SEQUENCE [LARGE SCALE GENOMIC DNA]</scope>
    <source>
        <strain>NBRC 101917 / NGR234</strain>
    </source>
</reference>
<reference key="2">
    <citation type="journal article" date="2009" name="Appl. Environ. Microbiol.">
        <title>Rhizobium sp. strain NGR234 possesses a remarkable number of secretion systems.</title>
        <authorList>
            <person name="Schmeisser C."/>
            <person name="Liesegang H."/>
            <person name="Krysciak D."/>
            <person name="Bakkou N."/>
            <person name="Le Quere A."/>
            <person name="Wollherr A."/>
            <person name="Heinemeyer I."/>
            <person name="Morgenstern B."/>
            <person name="Pommerening-Roeser A."/>
            <person name="Flores M."/>
            <person name="Palacios R."/>
            <person name="Brenner S."/>
            <person name="Gottschalk G."/>
            <person name="Schmitz R.A."/>
            <person name="Broughton W.J."/>
            <person name="Perret X."/>
            <person name="Strittmatter A.W."/>
            <person name="Streit W.R."/>
        </authorList>
    </citation>
    <scope>NUCLEOTIDE SEQUENCE [LARGE SCALE GENOMIC DNA]</scope>
    <source>
        <strain>NBRC 101917 / NGR234</strain>
    </source>
</reference>